<organism>
    <name type="scientific">Rickettsia felis (strain ATCC VR-1525 / URRWXCal2)</name>
    <name type="common">Rickettsia azadi</name>
    <dbReference type="NCBI Taxonomy" id="315456"/>
    <lineage>
        <taxon>Bacteria</taxon>
        <taxon>Pseudomonadati</taxon>
        <taxon>Pseudomonadota</taxon>
        <taxon>Alphaproteobacteria</taxon>
        <taxon>Rickettsiales</taxon>
        <taxon>Rickettsiaceae</taxon>
        <taxon>Rickettsieae</taxon>
        <taxon>Rickettsia</taxon>
        <taxon>spotted fever group</taxon>
    </lineage>
</organism>
<keyword id="KW-0961">Cell wall biogenesis/degradation</keyword>
<keyword id="KW-0456">Lyase</keyword>
<keyword id="KW-0732">Signal</keyword>
<reference key="1">
    <citation type="journal article" date="2005" name="PLoS Biol.">
        <title>The genome sequence of Rickettsia felis identifies the first putative conjugative plasmid in an obligate intracellular parasite.</title>
        <authorList>
            <person name="Ogata H."/>
            <person name="Renesto P."/>
            <person name="Audic S."/>
            <person name="Robert C."/>
            <person name="Blanc G."/>
            <person name="Fournier P.-E."/>
            <person name="Parinello H."/>
            <person name="Claverie J.-M."/>
            <person name="Raoult D."/>
        </authorList>
    </citation>
    <scope>NUCLEOTIDE SEQUENCE [LARGE SCALE GENOMIC DNA]</scope>
    <source>
        <strain>ATCC VR-1525 / URRWXCal2</strain>
    </source>
</reference>
<evidence type="ECO:0000255" key="1">
    <source>
        <dbReference type="HAMAP-Rule" id="MF_02071"/>
    </source>
</evidence>
<evidence type="ECO:0000305" key="2"/>
<proteinExistence type="inferred from homology"/>
<accession>Q4ULW1</accession>
<dbReference type="EC" id="4.2.2.-" evidence="1"/>
<dbReference type="EMBL" id="CP000053">
    <property type="protein sequence ID" value="AAY61462.1"/>
    <property type="status" value="ALT_INIT"/>
    <property type="molecule type" value="Genomic_DNA"/>
</dbReference>
<dbReference type="SMR" id="Q4ULW1"/>
<dbReference type="STRING" id="315456.RF_0611"/>
<dbReference type="KEGG" id="rfe:RF_0611"/>
<dbReference type="eggNOG" id="COG0797">
    <property type="taxonomic scope" value="Bacteria"/>
</dbReference>
<dbReference type="HOGENOM" id="CLU_042923_6_1_5"/>
<dbReference type="OrthoDB" id="9779128at2"/>
<dbReference type="Proteomes" id="UP000008548">
    <property type="component" value="Chromosome"/>
</dbReference>
<dbReference type="GO" id="GO:0008932">
    <property type="term" value="F:lytic endotransglycosylase activity"/>
    <property type="evidence" value="ECO:0007669"/>
    <property type="project" value="UniProtKB-UniRule"/>
</dbReference>
<dbReference type="GO" id="GO:0071555">
    <property type="term" value="P:cell wall organization"/>
    <property type="evidence" value="ECO:0007669"/>
    <property type="project" value="UniProtKB-KW"/>
</dbReference>
<dbReference type="GO" id="GO:0000270">
    <property type="term" value="P:peptidoglycan metabolic process"/>
    <property type="evidence" value="ECO:0007669"/>
    <property type="project" value="UniProtKB-UniRule"/>
</dbReference>
<dbReference type="CDD" id="cd22268">
    <property type="entry name" value="DPBB_RlpA-like"/>
    <property type="match status" value="1"/>
</dbReference>
<dbReference type="Gene3D" id="2.40.40.10">
    <property type="entry name" value="RlpA-like domain"/>
    <property type="match status" value="1"/>
</dbReference>
<dbReference type="HAMAP" id="MF_02071">
    <property type="entry name" value="RlpA"/>
    <property type="match status" value="1"/>
</dbReference>
<dbReference type="InterPro" id="IPR034718">
    <property type="entry name" value="RlpA"/>
</dbReference>
<dbReference type="InterPro" id="IPR009009">
    <property type="entry name" value="RlpA-like_DPBB"/>
</dbReference>
<dbReference type="InterPro" id="IPR036908">
    <property type="entry name" value="RlpA-like_sf"/>
</dbReference>
<dbReference type="InterPro" id="IPR012997">
    <property type="entry name" value="RplA"/>
</dbReference>
<dbReference type="NCBIfam" id="TIGR00413">
    <property type="entry name" value="rlpA"/>
    <property type="match status" value="1"/>
</dbReference>
<dbReference type="PANTHER" id="PTHR34183">
    <property type="entry name" value="ENDOLYTIC PEPTIDOGLYCAN TRANSGLYCOSYLASE RLPA"/>
    <property type="match status" value="1"/>
</dbReference>
<dbReference type="PANTHER" id="PTHR34183:SF1">
    <property type="entry name" value="ENDOLYTIC PEPTIDOGLYCAN TRANSGLYCOSYLASE RLPA"/>
    <property type="match status" value="1"/>
</dbReference>
<dbReference type="Pfam" id="PF03330">
    <property type="entry name" value="DPBB_1"/>
    <property type="match status" value="1"/>
</dbReference>
<dbReference type="SUPFAM" id="SSF50685">
    <property type="entry name" value="Barwin-like endoglucanases"/>
    <property type="match status" value="1"/>
</dbReference>
<protein>
    <recommendedName>
        <fullName evidence="1">Endolytic peptidoglycan transglycosylase RlpA</fullName>
        <ecNumber evidence="1">4.2.2.-</ecNumber>
    </recommendedName>
</protein>
<feature type="signal peptide" evidence="1">
    <location>
        <begin position="1"/>
        <end position="23"/>
    </location>
</feature>
<feature type="chain" id="PRO_0000280827" description="Endolytic peptidoglycan transglycosylase RlpA" evidence="1">
    <location>
        <begin position="24"/>
        <end position="228"/>
    </location>
</feature>
<sequence length="228" mass="25932">MIQRHKLIVLIFLLIFCLSGCNTSKRLPYSHKYSYKELSKDDPHNLTYKGHYKVGKNYKIKGKTYKPHSTKSFTETGYASWYGGRKDGFHGKKTANGDRFNRNLLTAAHKTLPLPCLVKVTNKANNKSVILMVNDRGPFKKNRIIDVSQKAAEILAFKNQGITKVKIEYLPNETEKFLKNINLKKPQSKTLAKNSKKSSSTKVTKNAKCSVNCHIKLVNLKYKLAVNP</sequence>
<comment type="function">
    <text evidence="1">Lytic transglycosylase with a strong preference for naked glycan strands that lack stem peptides.</text>
</comment>
<comment type="similarity">
    <text evidence="1">Belongs to the RlpA family.</text>
</comment>
<comment type="sequence caution" evidence="2">
    <conflict type="erroneous initiation">
        <sequence resource="EMBL-CDS" id="AAY61462"/>
    </conflict>
</comment>
<gene>
    <name evidence="1" type="primary">rlpA</name>
    <name type="ordered locus">RF_0611</name>
</gene>
<name>RLPA_RICFE</name>